<keyword id="KW-0067">ATP-binding</keyword>
<keyword id="KW-0963">Cytoplasm</keyword>
<keyword id="KW-0227">DNA damage</keyword>
<keyword id="KW-0233">DNA recombination</keyword>
<keyword id="KW-0234">DNA repair</keyword>
<keyword id="KW-0238">DNA-binding</keyword>
<keyword id="KW-0547">Nucleotide-binding</keyword>
<keyword id="KW-1185">Reference proteome</keyword>
<keyword id="KW-0742">SOS response</keyword>
<evidence type="ECO:0000255" key="1">
    <source>
        <dbReference type="HAMAP-Rule" id="MF_00268"/>
    </source>
</evidence>
<evidence type="ECO:0000256" key="2">
    <source>
        <dbReference type="SAM" id="MobiDB-lite"/>
    </source>
</evidence>
<accession>Q03R29</accession>
<gene>
    <name evidence="1" type="primary">recA</name>
    <name type="ordered locus">LVIS_1237</name>
</gene>
<proteinExistence type="inferred from homology"/>
<dbReference type="EMBL" id="CP000416">
    <property type="protein sequence ID" value="ABJ64343.1"/>
    <property type="molecule type" value="Genomic_DNA"/>
</dbReference>
<dbReference type="RefSeq" id="WP_011667973.1">
    <property type="nucleotide sequence ID" value="NC_008497.1"/>
</dbReference>
<dbReference type="SMR" id="Q03R29"/>
<dbReference type="STRING" id="387344.LVIS_1237"/>
<dbReference type="GeneID" id="56992615"/>
<dbReference type="KEGG" id="lbr:LVIS_1237"/>
<dbReference type="eggNOG" id="COG0468">
    <property type="taxonomic scope" value="Bacteria"/>
</dbReference>
<dbReference type="HOGENOM" id="CLU_040469_3_2_9"/>
<dbReference type="Proteomes" id="UP000001652">
    <property type="component" value="Chromosome"/>
</dbReference>
<dbReference type="GO" id="GO:0005829">
    <property type="term" value="C:cytosol"/>
    <property type="evidence" value="ECO:0007669"/>
    <property type="project" value="TreeGrafter"/>
</dbReference>
<dbReference type="GO" id="GO:0005524">
    <property type="term" value="F:ATP binding"/>
    <property type="evidence" value="ECO:0007669"/>
    <property type="project" value="UniProtKB-UniRule"/>
</dbReference>
<dbReference type="GO" id="GO:0016887">
    <property type="term" value="F:ATP hydrolysis activity"/>
    <property type="evidence" value="ECO:0007669"/>
    <property type="project" value="InterPro"/>
</dbReference>
<dbReference type="GO" id="GO:0140664">
    <property type="term" value="F:ATP-dependent DNA damage sensor activity"/>
    <property type="evidence" value="ECO:0007669"/>
    <property type="project" value="InterPro"/>
</dbReference>
<dbReference type="GO" id="GO:0003684">
    <property type="term" value="F:damaged DNA binding"/>
    <property type="evidence" value="ECO:0007669"/>
    <property type="project" value="UniProtKB-UniRule"/>
</dbReference>
<dbReference type="GO" id="GO:0003697">
    <property type="term" value="F:single-stranded DNA binding"/>
    <property type="evidence" value="ECO:0007669"/>
    <property type="project" value="UniProtKB-UniRule"/>
</dbReference>
<dbReference type="GO" id="GO:0006310">
    <property type="term" value="P:DNA recombination"/>
    <property type="evidence" value="ECO:0007669"/>
    <property type="project" value="UniProtKB-UniRule"/>
</dbReference>
<dbReference type="GO" id="GO:0006281">
    <property type="term" value="P:DNA repair"/>
    <property type="evidence" value="ECO:0007669"/>
    <property type="project" value="UniProtKB-UniRule"/>
</dbReference>
<dbReference type="GO" id="GO:0009432">
    <property type="term" value="P:SOS response"/>
    <property type="evidence" value="ECO:0007669"/>
    <property type="project" value="UniProtKB-UniRule"/>
</dbReference>
<dbReference type="CDD" id="cd00983">
    <property type="entry name" value="RecA"/>
    <property type="match status" value="1"/>
</dbReference>
<dbReference type="FunFam" id="3.40.50.300:FF:000087">
    <property type="entry name" value="Recombinase RecA"/>
    <property type="match status" value="1"/>
</dbReference>
<dbReference type="Gene3D" id="3.40.50.300">
    <property type="entry name" value="P-loop containing nucleotide triphosphate hydrolases"/>
    <property type="match status" value="1"/>
</dbReference>
<dbReference type="HAMAP" id="MF_00268">
    <property type="entry name" value="RecA"/>
    <property type="match status" value="1"/>
</dbReference>
<dbReference type="InterPro" id="IPR003593">
    <property type="entry name" value="AAA+_ATPase"/>
</dbReference>
<dbReference type="InterPro" id="IPR013765">
    <property type="entry name" value="DNA_recomb/repair_RecA"/>
</dbReference>
<dbReference type="InterPro" id="IPR020584">
    <property type="entry name" value="DNA_recomb/repair_RecA_CS"/>
</dbReference>
<dbReference type="InterPro" id="IPR027417">
    <property type="entry name" value="P-loop_NTPase"/>
</dbReference>
<dbReference type="InterPro" id="IPR049261">
    <property type="entry name" value="RecA-like_C"/>
</dbReference>
<dbReference type="InterPro" id="IPR049428">
    <property type="entry name" value="RecA-like_N"/>
</dbReference>
<dbReference type="InterPro" id="IPR020588">
    <property type="entry name" value="RecA_ATP-bd"/>
</dbReference>
<dbReference type="InterPro" id="IPR023400">
    <property type="entry name" value="RecA_C_sf"/>
</dbReference>
<dbReference type="InterPro" id="IPR020587">
    <property type="entry name" value="RecA_monomer-monomer_interface"/>
</dbReference>
<dbReference type="NCBIfam" id="TIGR02012">
    <property type="entry name" value="tigrfam_recA"/>
    <property type="match status" value="1"/>
</dbReference>
<dbReference type="PANTHER" id="PTHR45900:SF1">
    <property type="entry name" value="MITOCHONDRIAL DNA REPAIR PROTEIN RECA HOMOLOG-RELATED"/>
    <property type="match status" value="1"/>
</dbReference>
<dbReference type="PANTHER" id="PTHR45900">
    <property type="entry name" value="RECA"/>
    <property type="match status" value="1"/>
</dbReference>
<dbReference type="Pfam" id="PF00154">
    <property type="entry name" value="RecA"/>
    <property type="match status" value="1"/>
</dbReference>
<dbReference type="Pfam" id="PF21096">
    <property type="entry name" value="RecA_C"/>
    <property type="match status" value="1"/>
</dbReference>
<dbReference type="PRINTS" id="PR00142">
    <property type="entry name" value="RECA"/>
</dbReference>
<dbReference type="SMART" id="SM00382">
    <property type="entry name" value="AAA"/>
    <property type="match status" value="1"/>
</dbReference>
<dbReference type="SUPFAM" id="SSF52540">
    <property type="entry name" value="P-loop containing nucleoside triphosphate hydrolases"/>
    <property type="match status" value="1"/>
</dbReference>
<dbReference type="SUPFAM" id="SSF54752">
    <property type="entry name" value="RecA protein, C-terminal domain"/>
    <property type="match status" value="1"/>
</dbReference>
<dbReference type="PROSITE" id="PS00321">
    <property type="entry name" value="RECA_1"/>
    <property type="match status" value="1"/>
</dbReference>
<dbReference type="PROSITE" id="PS50162">
    <property type="entry name" value="RECA_2"/>
    <property type="match status" value="1"/>
</dbReference>
<dbReference type="PROSITE" id="PS50163">
    <property type="entry name" value="RECA_3"/>
    <property type="match status" value="1"/>
</dbReference>
<organism>
    <name type="scientific">Levilactobacillus brevis (strain ATCC 367 / BCRC 12310 / CIP 105137 / JCM 1170 / LMG 11437 / NCIMB 947 / NCTC 947)</name>
    <name type="common">Lactobacillus brevis</name>
    <dbReference type="NCBI Taxonomy" id="387344"/>
    <lineage>
        <taxon>Bacteria</taxon>
        <taxon>Bacillati</taxon>
        <taxon>Bacillota</taxon>
        <taxon>Bacilli</taxon>
        <taxon>Lactobacillales</taxon>
        <taxon>Lactobacillaceae</taxon>
        <taxon>Levilactobacillus</taxon>
    </lineage>
</organism>
<feature type="chain" id="PRO_1000047936" description="Protein RecA">
    <location>
        <begin position="1"/>
        <end position="377"/>
    </location>
</feature>
<feature type="region of interest" description="Disordered" evidence="2">
    <location>
        <begin position="329"/>
        <end position="377"/>
    </location>
</feature>
<feature type="compositionally biased region" description="Basic and acidic residues" evidence="2">
    <location>
        <begin position="339"/>
        <end position="361"/>
    </location>
</feature>
<feature type="binding site" evidence="1">
    <location>
        <begin position="65"/>
        <end position="72"/>
    </location>
    <ligand>
        <name>ATP</name>
        <dbReference type="ChEBI" id="CHEBI:30616"/>
    </ligand>
</feature>
<sequence length="377" mass="40321">MADERQAALDKALKKIEKDFGKGSIMRLGDNSNLEVETVPSGSLALDVALGVGGYPRGRIVEIYGPESSGKTTVALHAVAEVQKRGGTAAYIDAENALDPAYATALGVNIDDLLLSQPDTGEQGLQIADALISSGAIDIVVVDSVAALVPRAEIEGEMGDAHVGLQARLMSQALRKLSGTINKTKTIALFINQIREKVGVMFGNPETTPGGRALKFYATVRLEVRRAEQIKDGTDVIGNRTRIKVVKNKVAPPFKRAEVDIMYGQGISQTGELLDMAVEKDIVDKSGSWYSYGEDRIGQGRENAKQYLADHPDMMAEVNQRVRAAYGVGDEEAAATKATETKTDAPKDKDKGKTKAKDKPADVTPGQIELAPDKSAK</sequence>
<name>RECA_LEVBA</name>
<reference key="1">
    <citation type="journal article" date="2006" name="Proc. Natl. Acad. Sci. U.S.A.">
        <title>Comparative genomics of the lactic acid bacteria.</title>
        <authorList>
            <person name="Makarova K.S."/>
            <person name="Slesarev A."/>
            <person name="Wolf Y.I."/>
            <person name="Sorokin A."/>
            <person name="Mirkin B."/>
            <person name="Koonin E.V."/>
            <person name="Pavlov A."/>
            <person name="Pavlova N."/>
            <person name="Karamychev V."/>
            <person name="Polouchine N."/>
            <person name="Shakhova V."/>
            <person name="Grigoriev I."/>
            <person name="Lou Y."/>
            <person name="Rohksar D."/>
            <person name="Lucas S."/>
            <person name="Huang K."/>
            <person name="Goodstein D.M."/>
            <person name="Hawkins T."/>
            <person name="Plengvidhya V."/>
            <person name="Welker D."/>
            <person name="Hughes J."/>
            <person name="Goh Y."/>
            <person name="Benson A."/>
            <person name="Baldwin K."/>
            <person name="Lee J.-H."/>
            <person name="Diaz-Muniz I."/>
            <person name="Dosti B."/>
            <person name="Smeianov V."/>
            <person name="Wechter W."/>
            <person name="Barabote R."/>
            <person name="Lorca G."/>
            <person name="Altermann E."/>
            <person name="Barrangou R."/>
            <person name="Ganesan B."/>
            <person name="Xie Y."/>
            <person name="Rawsthorne H."/>
            <person name="Tamir D."/>
            <person name="Parker C."/>
            <person name="Breidt F."/>
            <person name="Broadbent J.R."/>
            <person name="Hutkins R."/>
            <person name="O'Sullivan D."/>
            <person name="Steele J."/>
            <person name="Unlu G."/>
            <person name="Saier M.H. Jr."/>
            <person name="Klaenhammer T."/>
            <person name="Richardson P."/>
            <person name="Kozyavkin S."/>
            <person name="Weimer B.C."/>
            <person name="Mills D.A."/>
        </authorList>
    </citation>
    <scope>NUCLEOTIDE SEQUENCE [LARGE SCALE GENOMIC DNA]</scope>
    <source>
        <strain>ATCC 367 / BCRC 12310 / CIP 105137 / JCM 1170 / LMG 11437 / NCIMB 947 / NCTC 947</strain>
    </source>
</reference>
<comment type="function">
    <text evidence="1">Can catalyze the hydrolysis of ATP in the presence of single-stranded DNA, the ATP-dependent uptake of single-stranded DNA by duplex DNA, and the ATP-dependent hybridization of homologous single-stranded DNAs. It interacts with LexA causing its activation and leading to its autocatalytic cleavage.</text>
</comment>
<comment type="subcellular location">
    <subcellularLocation>
        <location evidence="1">Cytoplasm</location>
    </subcellularLocation>
</comment>
<comment type="similarity">
    <text evidence="1">Belongs to the RecA family.</text>
</comment>
<protein>
    <recommendedName>
        <fullName evidence="1">Protein RecA</fullName>
    </recommendedName>
    <alternativeName>
        <fullName evidence="1">Recombinase A</fullName>
    </alternativeName>
</protein>